<sequence>MAKISKRINKIREGVDRNKLYDLSAAIGLVKERAVAKFDETVEIAMNLGVDPRHADQMVRGVVNLPNGTGRTVRVAVFARGDKAEEAKKAGADIVGAEELFEIVNGGKIEFDRCIATPDMMPLVGRLGKVLGPRGMMPNPKVGTVTTDVAAAVAASKGGAVEFRVEKAGIIHAGIGKVSFDNAKLEENIKAFADAVIKAKPSAAKGEYVKRVSISSTMGVGVKVDPSTVKVVD</sequence>
<feature type="chain" id="PRO_1000086273" description="Large ribosomal subunit protein uL1">
    <location>
        <begin position="1"/>
        <end position="233"/>
    </location>
</feature>
<keyword id="KW-1185">Reference proteome</keyword>
<keyword id="KW-0678">Repressor</keyword>
<keyword id="KW-0687">Ribonucleoprotein</keyword>
<keyword id="KW-0689">Ribosomal protein</keyword>
<keyword id="KW-0694">RNA-binding</keyword>
<keyword id="KW-0699">rRNA-binding</keyword>
<keyword id="KW-0810">Translation regulation</keyword>
<keyword id="KW-0820">tRNA-binding</keyword>
<proteinExistence type="inferred from homology"/>
<evidence type="ECO:0000255" key="1">
    <source>
        <dbReference type="HAMAP-Rule" id="MF_01318"/>
    </source>
</evidence>
<evidence type="ECO:0000305" key="2"/>
<gene>
    <name evidence="1" type="primary">rplA</name>
    <name type="ordered locus">BCAN_A1269</name>
</gene>
<protein>
    <recommendedName>
        <fullName evidence="1">Large ribosomal subunit protein uL1</fullName>
    </recommendedName>
    <alternativeName>
        <fullName evidence="2">50S ribosomal protein L1</fullName>
    </alternativeName>
</protein>
<name>RL1_BRUC2</name>
<organism>
    <name type="scientific">Brucella canis (strain ATCC 23365 / NCTC 10854 / RM-666)</name>
    <dbReference type="NCBI Taxonomy" id="483179"/>
    <lineage>
        <taxon>Bacteria</taxon>
        <taxon>Pseudomonadati</taxon>
        <taxon>Pseudomonadota</taxon>
        <taxon>Alphaproteobacteria</taxon>
        <taxon>Hyphomicrobiales</taxon>
        <taxon>Brucellaceae</taxon>
        <taxon>Brucella/Ochrobactrum group</taxon>
        <taxon>Brucella</taxon>
    </lineage>
</organism>
<dbReference type="EMBL" id="CP000872">
    <property type="protein sequence ID" value="ABX62318.1"/>
    <property type="molecule type" value="Genomic_DNA"/>
</dbReference>
<dbReference type="RefSeq" id="WP_002964373.1">
    <property type="nucleotide sequence ID" value="NC_010103.1"/>
</dbReference>
<dbReference type="SMR" id="A9M5R3"/>
<dbReference type="GeneID" id="97533514"/>
<dbReference type="KEGG" id="bcs:BCAN_A1269"/>
<dbReference type="HOGENOM" id="CLU_062853_0_0_5"/>
<dbReference type="PhylomeDB" id="A9M5R3"/>
<dbReference type="Proteomes" id="UP000001385">
    <property type="component" value="Chromosome I"/>
</dbReference>
<dbReference type="GO" id="GO:0022625">
    <property type="term" value="C:cytosolic large ribosomal subunit"/>
    <property type="evidence" value="ECO:0007669"/>
    <property type="project" value="TreeGrafter"/>
</dbReference>
<dbReference type="GO" id="GO:0019843">
    <property type="term" value="F:rRNA binding"/>
    <property type="evidence" value="ECO:0007669"/>
    <property type="project" value="UniProtKB-UniRule"/>
</dbReference>
<dbReference type="GO" id="GO:0003735">
    <property type="term" value="F:structural constituent of ribosome"/>
    <property type="evidence" value="ECO:0007669"/>
    <property type="project" value="InterPro"/>
</dbReference>
<dbReference type="GO" id="GO:0000049">
    <property type="term" value="F:tRNA binding"/>
    <property type="evidence" value="ECO:0007669"/>
    <property type="project" value="UniProtKB-KW"/>
</dbReference>
<dbReference type="GO" id="GO:0006417">
    <property type="term" value="P:regulation of translation"/>
    <property type="evidence" value="ECO:0007669"/>
    <property type="project" value="UniProtKB-KW"/>
</dbReference>
<dbReference type="GO" id="GO:0006412">
    <property type="term" value="P:translation"/>
    <property type="evidence" value="ECO:0007669"/>
    <property type="project" value="UniProtKB-UniRule"/>
</dbReference>
<dbReference type="CDD" id="cd00403">
    <property type="entry name" value="Ribosomal_L1"/>
    <property type="match status" value="1"/>
</dbReference>
<dbReference type="FunFam" id="3.40.50.790:FF:000001">
    <property type="entry name" value="50S ribosomal protein L1"/>
    <property type="match status" value="1"/>
</dbReference>
<dbReference type="Gene3D" id="3.30.190.20">
    <property type="match status" value="1"/>
</dbReference>
<dbReference type="Gene3D" id="3.40.50.790">
    <property type="match status" value="1"/>
</dbReference>
<dbReference type="HAMAP" id="MF_01318_B">
    <property type="entry name" value="Ribosomal_uL1_B"/>
    <property type="match status" value="1"/>
</dbReference>
<dbReference type="InterPro" id="IPR005878">
    <property type="entry name" value="Ribosom_uL1_bac-type"/>
</dbReference>
<dbReference type="InterPro" id="IPR002143">
    <property type="entry name" value="Ribosomal_uL1"/>
</dbReference>
<dbReference type="InterPro" id="IPR023674">
    <property type="entry name" value="Ribosomal_uL1-like"/>
</dbReference>
<dbReference type="InterPro" id="IPR028364">
    <property type="entry name" value="Ribosomal_uL1/biogenesis"/>
</dbReference>
<dbReference type="InterPro" id="IPR016095">
    <property type="entry name" value="Ribosomal_uL1_3-a/b-sand"/>
</dbReference>
<dbReference type="InterPro" id="IPR023673">
    <property type="entry name" value="Ribosomal_uL1_CS"/>
</dbReference>
<dbReference type="NCBIfam" id="TIGR01169">
    <property type="entry name" value="rplA_bact"/>
    <property type="match status" value="1"/>
</dbReference>
<dbReference type="PANTHER" id="PTHR36427">
    <property type="entry name" value="54S RIBOSOMAL PROTEIN L1, MITOCHONDRIAL"/>
    <property type="match status" value="1"/>
</dbReference>
<dbReference type="PANTHER" id="PTHR36427:SF3">
    <property type="entry name" value="LARGE RIBOSOMAL SUBUNIT PROTEIN UL1M"/>
    <property type="match status" value="1"/>
</dbReference>
<dbReference type="Pfam" id="PF00687">
    <property type="entry name" value="Ribosomal_L1"/>
    <property type="match status" value="1"/>
</dbReference>
<dbReference type="PIRSF" id="PIRSF002155">
    <property type="entry name" value="Ribosomal_L1"/>
    <property type="match status" value="1"/>
</dbReference>
<dbReference type="SUPFAM" id="SSF56808">
    <property type="entry name" value="Ribosomal protein L1"/>
    <property type="match status" value="1"/>
</dbReference>
<dbReference type="PROSITE" id="PS01199">
    <property type="entry name" value="RIBOSOMAL_L1"/>
    <property type="match status" value="1"/>
</dbReference>
<comment type="function">
    <text evidence="1">Binds directly to 23S rRNA. The L1 stalk is quite mobile in the ribosome, and is involved in E site tRNA release.</text>
</comment>
<comment type="function">
    <text evidence="1">Protein L1 is also a translational repressor protein, it controls the translation of the L11 operon by binding to its mRNA.</text>
</comment>
<comment type="subunit">
    <text evidence="1">Part of the 50S ribosomal subunit.</text>
</comment>
<comment type="similarity">
    <text evidence="1">Belongs to the universal ribosomal protein uL1 family.</text>
</comment>
<accession>A9M5R3</accession>
<reference key="1">
    <citation type="submission" date="2007-10" db="EMBL/GenBank/DDBJ databases">
        <title>Brucella canis ATCC 23365 whole genome shotgun sequencing project.</title>
        <authorList>
            <person name="Setubal J.C."/>
            <person name="Bowns C."/>
            <person name="Boyle S."/>
            <person name="Crasta O.R."/>
            <person name="Czar M.J."/>
            <person name="Dharmanolla C."/>
            <person name="Gillespie J.J."/>
            <person name="Kenyon R.W."/>
            <person name="Lu J."/>
            <person name="Mane S."/>
            <person name="Mohapatra S."/>
            <person name="Nagrani S."/>
            <person name="Purkayastha A."/>
            <person name="Rajasimha H.K."/>
            <person name="Shallom J.M."/>
            <person name="Shallom S."/>
            <person name="Shukla M."/>
            <person name="Snyder E.E."/>
            <person name="Sobral B.W."/>
            <person name="Wattam A.R."/>
            <person name="Will R."/>
            <person name="Williams K."/>
            <person name="Yoo H."/>
            <person name="Bruce D."/>
            <person name="Detter C."/>
            <person name="Munk C."/>
            <person name="Brettin T.S."/>
        </authorList>
    </citation>
    <scope>NUCLEOTIDE SEQUENCE [LARGE SCALE GENOMIC DNA]</scope>
    <source>
        <strain>ATCC 23365 / NCTC 10854 / RM-666</strain>
    </source>
</reference>